<sequence length="402" mass="45015">MYGITSTANSTGNQSYANRLFIYEVVGLGGDGRNENSLVRKSGTTFITVPYARMNQEMQRITKLGGKIVSIRPAEDAAQIVSEGQSSAQASAQSPMASSTKIVHPKTTDTSVPVNIYRPKTPFLGKCIENYELVDEGGSGTVRHVTFDISEGDLRYLEGQSIGIIPPGEDKNGKPHKLRLYSIASTRHGDMEDNKTVSLCVRQLEYQDPESGETVYGVCSTYLCNLPVGTDDVKITGPVGKEMLLPDDEDATVVMLATGTGIAPFRAFLWRMFKEQHEDYKFKGKAWLIFGVPYTANILYKDDFEKMAAENPDNFRLTYAISREQKTADGGKVYVQSRVSEYADELFEMIQKPNTHVYMCGLKGMQPPIDETFTAEAEKRGLNWEEMRRSMKKEHRWHVEVY</sequence>
<dbReference type="EC" id="1.18.1.2"/>
<dbReference type="EMBL" id="M86234">
    <property type="protein sequence ID" value="AAA27323.1"/>
    <property type="molecule type" value="Genomic_DNA"/>
</dbReference>
<dbReference type="EMBL" id="CP000951">
    <property type="protein sequence ID" value="ACA98857.1"/>
    <property type="molecule type" value="Genomic_DNA"/>
</dbReference>
<dbReference type="EMBL" id="M99378">
    <property type="protein sequence ID" value="AAA27310.1"/>
    <property type="molecule type" value="Genomic_DNA"/>
</dbReference>
<dbReference type="RefSeq" id="WP_012306481.1">
    <property type="nucleotide sequence ID" value="NZ_JAHHPU010000001.1"/>
</dbReference>
<dbReference type="PDB" id="2B5O">
    <property type="method" value="X-ray"/>
    <property type="resolution" value="2.50 A"/>
    <property type="chains" value="A/B=1-402"/>
</dbReference>
<dbReference type="PDBsum" id="2B5O"/>
<dbReference type="SMR" id="P31973"/>
<dbReference type="STRING" id="32049.SYNPCC7002_A0853"/>
<dbReference type="KEGG" id="syp:SYNPCC7002_A0853"/>
<dbReference type="eggNOG" id="COG0369">
    <property type="taxonomic scope" value="Bacteria"/>
</dbReference>
<dbReference type="HOGENOM" id="CLU_053066_0_0_3"/>
<dbReference type="EvolutionaryTrace" id="P31973"/>
<dbReference type="Proteomes" id="UP000001688">
    <property type="component" value="Chromosome"/>
</dbReference>
<dbReference type="GO" id="GO:0030089">
    <property type="term" value="C:phycobilisome"/>
    <property type="evidence" value="ECO:0007669"/>
    <property type="project" value="UniProtKB-KW"/>
</dbReference>
<dbReference type="GO" id="GO:0031676">
    <property type="term" value="C:plasma membrane-derived thylakoid membrane"/>
    <property type="evidence" value="ECO:0007669"/>
    <property type="project" value="UniProtKB-SubCell"/>
</dbReference>
<dbReference type="GO" id="GO:0004324">
    <property type="term" value="F:ferredoxin-NADP+ reductase activity"/>
    <property type="evidence" value="ECO:0007669"/>
    <property type="project" value="UniProtKB-EC"/>
</dbReference>
<dbReference type="CDD" id="cd06208">
    <property type="entry name" value="CYPOR_like_FNR"/>
    <property type="match status" value="1"/>
</dbReference>
<dbReference type="FunFam" id="3.40.50.80:FF:000008">
    <property type="entry name" value="Ferredoxin--NADP reductase, chloroplastic"/>
    <property type="match status" value="1"/>
</dbReference>
<dbReference type="Gene3D" id="3.40.50.80">
    <property type="entry name" value="Nucleotide-binding domain of ferredoxin-NADP reductase (FNR) module"/>
    <property type="match status" value="1"/>
</dbReference>
<dbReference type="Gene3D" id="2.40.30.10">
    <property type="entry name" value="Translation factors"/>
    <property type="match status" value="1"/>
</dbReference>
<dbReference type="InterPro" id="IPR008213">
    <property type="entry name" value="CpcD-like_dom"/>
</dbReference>
<dbReference type="InterPro" id="IPR017927">
    <property type="entry name" value="FAD-bd_FR_type"/>
</dbReference>
<dbReference type="InterPro" id="IPR001709">
    <property type="entry name" value="Flavoprot_Pyr_Nucl_cyt_Rdtase"/>
</dbReference>
<dbReference type="InterPro" id="IPR015701">
    <property type="entry name" value="FNR"/>
</dbReference>
<dbReference type="InterPro" id="IPR039261">
    <property type="entry name" value="FNR_nucleotide-bd"/>
</dbReference>
<dbReference type="InterPro" id="IPR035442">
    <property type="entry name" value="FNR_plant_Cyanobacteria"/>
</dbReference>
<dbReference type="InterPro" id="IPR001433">
    <property type="entry name" value="OxRdtase_FAD/NAD-bd"/>
</dbReference>
<dbReference type="InterPro" id="IPR017938">
    <property type="entry name" value="Riboflavin_synthase-like_b-brl"/>
</dbReference>
<dbReference type="NCBIfam" id="NF045929">
    <property type="entry name" value="FNRPetHCyano"/>
    <property type="match status" value="1"/>
</dbReference>
<dbReference type="PANTHER" id="PTHR43314">
    <property type="match status" value="1"/>
</dbReference>
<dbReference type="Pfam" id="PF01383">
    <property type="entry name" value="CpcD"/>
    <property type="match status" value="1"/>
</dbReference>
<dbReference type="Pfam" id="PF00175">
    <property type="entry name" value="NAD_binding_1"/>
    <property type="match status" value="1"/>
</dbReference>
<dbReference type="PIRSF" id="PIRSF501178">
    <property type="entry name" value="FNR-PetH"/>
    <property type="match status" value="1"/>
</dbReference>
<dbReference type="PIRSF" id="PIRSF000361">
    <property type="entry name" value="Frd-NADP+_RD"/>
    <property type="match status" value="1"/>
</dbReference>
<dbReference type="PRINTS" id="PR00371">
    <property type="entry name" value="FPNCR"/>
</dbReference>
<dbReference type="SMART" id="SM01094">
    <property type="entry name" value="CpcD"/>
    <property type="match status" value="1"/>
</dbReference>
<dbReference type="SUPFAM" id="SSF52343">
    <property type="entry name" value="Ferredoxin reductase-like, C-terminal NADP-linked domain"/>
    <property type="match status" value="1"/>
</dbReference>
<dbReference type="SUPFAM" id="SSF63380">
    <property type="entry name" value="Riboflavin synthase domain-like"/>
    <property type="match status" value="1"/>
</dbReference>
<dbReference type="PROSITE" id="PS51441">
    <property type="entry name" value="CPCD_LIKE"/>
    <property type="match status" value="1"/>
</dbReference>
<dbReference type="PROSITE" id="PS51384">
    <property type="entry name" value="FAD_FR"/>
    <property type="match status" value="1"/>
</dbReference>
<comment type="catalytic activity">
    <reaction>
        <text>2 reduced [2Fe-2S]-[ferredoxin] + NADP(+) + H(+) = 2 oxidized [2Fe-2S]-[ferredoxin] + NADPH</text>
        <dbReference type="Rhea" id="RHEA:20125"/>
        <dbReference type="Rhea" id="RHEA-COMP:10000"/>
        <dbReference type="Rhea" id="RHEA-COMP:10001"/>
        <dbReference type="ChEBI" id="CHEBI:15378"/>
        <dbReference type="ChEBI" id="CHEBI:33737"/>
        <dbReference type="ChEBI" id="CHEBI:33738"/>
        <dbReference type="ChEBI" id="CHEBI:57783"/>
        <dbReference type="ChEBI" id="CHEBI:58349"/>
        <dbReference type="EC" id="1.18.1.2"/>
    </reaction>
</comment>
<comment type="cofactor">
    <cofactor>
        <name>FAD</name>
        <dbReference type="ChEBI" id="CHEBI:57692"/>
    </cofactor>
</comment>
<comment type="subcellular location">
    <subcellularLocation>
        <location>Cellular thylakoid membrane</location>
        <topology>Peripheral membrane protein</topology>
        <orientation>Cytoplasmic side</orientation>
    </subcellularLocation>
    <text>May be bound to the thylakoid membrane or anchored to the thylakoid-bound phycobilisomes.</text>
</comment>
<comment type="similarity">
    <text evidence="5">Belongs to the ferredoxin--NADP reductase type 1 family.</text>
</comment>
<gene>
    <name type="primary">petH</name>
    <name type="ordered locus">SYNPCC7002_A0853</name>
</gene>
<keyword id="KW-0002">3D-structure</keyword>
<keyword id="KW-0042">Antenna complex</keyword>
<keyword id="KW-0903">Direct protein sequencing</keyword>
<keyword id="KW-0274">FAD</keyword>
<keyword id="KW-0285">Flavoprotein</keyword>
<keyword id="KW-0472">Membrane</keyword>
<keyword id="KW-0521">NADP</keyword>
<keyword id="KW-0560">Oxidoreductase</keyword>
<keyword id="KW-0605">Phycobilisome</keyword>
<keyword id="KW-1185">Reference proteome</keyword>
<keyword id="KW-0793">Thylakoid</keyword>
<name>FENR_PICP2</name>
<reference key="1">
    <citation type="journal article" date="1992" name="Biochemistry">
        <title>Molecular characterization of ferredoxin-NADP+ oxidoreductase in cyanobacteria: cloning and sequence of the petH gene of Synechococcus sp. PCC 7002 and studies on the gene product.</title>
        <authorList>
            <person name="Schluchter W.M."/>
            <person name="Bryant D.A."/>
        </authorList>
    </citation>
    <scope>NUCLEOTIDE SEQUENCE [GENOMIC DNA]</scope>
    <scope>PARTIAL PROTEIN SEQUENCE</scope>
    <scope>CHARACTERIZATION</scope>
</reference>
<reference key="2">
    <citation type="submission" date="2008-02" db="EMBL/GenBank/DDBJ databases">
        <title>Complete sequence of Synechococcus sp. PCC 7002.</title>
        <authorList>
            <person name="Li T."/>
            <person name="Zhao J."/>
            <person name="Zhao C."/>
            <person name="Liu Z."/>
            <person name="Zhao F."/>
            <person name="Marquardt J."/>
            <person name="Nomura C.T."/>
            <person name="Persson S."/>
            <person name="Detter J.C."/>
            <person name="Richardson P.M."/>
            <person name="Lanz C."/>
            <person name="Schuster S.C."/>
            <person name="Wang J."/>
            <person name="Li S."/>
            <person name="Huang X."/>
            <person name="Cai T."/>
            <person name="Yu Z."/>
            <person name="Luo J."/>
            <person name="Zhao J."/>
            <person name="Bryant D.A."/>
        </authorList>
    </citation>
    <scope>NUCLEOTIDE SEQUENCE [LARGE SCALE GENOMIC DNA]</scope>
    <source>
        <strain>ATCC 27264 / PCC 7002 / PR-6</strain>
    </source>
</reference>
<reference key="3">
    <citation type="journal article" date="1993" name="J. Bacteriol.">
        <title>Isolation and characterization of the ndhF gene of Synechococcus sp. strain PCC 7002 and initial characterization of an interposon mutant.</title>
        <authorList>
            <person name="Schluchter W.M."/>
            <person name="Zhao J."/>
            <person name="Bryant D.A."/>
        </authorList>
    </citation>
    <scope>NUCLEOTIDE SEQUENCE [GENOMIC DNA] OF 1-18</scope>
</reference>
<accession>P31973</accession>
<accession>B1XII6</accession>
<protein>
    <recommendedName>
        <fullName>Ferredoxin--NADP reductase</fullName>
        <shortName>FNR</shortName>
        <ecNumber>1.18.1.2</ecNumber>
    </recommendedName>
</protein>
<proteinExistence type="evidence at protein level"/>
<organism>
    <name type="scientific">Picosynechococcus sp. (strain ATCC 27264 / PCC 7002 / PR-6)</name>
    <name type="common">Agmenellum quadruplicatum</name>
    <dbReference type="NCBI Taxonomy" id="32049"/>
    <lineage>
        <taxon>Bacteria</taxon>
        <taxon>Bacillati</taxon>
        <taxon>Cyanobacteriota</taxon>
        <taxon>Cyanophyceae</taxon>
        <taxon>Oscillatoriophycideae</taxon>
        <taxon>Chroococcales</taxon>
        <taxon>Geminocystaceae</taxon>
        <taxon>Picosynechococcus</taxon>
    </lineage>
</organism>
<feature type="chain" id="PRO_0000167637" description="Ferredoxin--NADP reductase">
    <location>
        <begin position="1"/>
        <end position="402"/>
    </location>
</feature>
<feature type="domain" description="CpcD-like" evidence="3">
    <location>
        <begin position="18"/>
        <end position="74"/>
    </location>
</feature>
<feature type="domain" description="FAD-binding FR-type" evidence="2">
    <location>
        <begin position="120"/>
        <end position="245"/>
    </location>
</feature>
<feature type="region of interest" description="Disordered" evidence="4">
    <location>
        <begin position="80"/>
        <end position="101"/>
    </location>
</feature>
<feature type="compositionally biased region" description="Low complexity" evidence="4">
    <location>
        <begin position="85"/>
        <end position="99"/>
    </location>
</feature>
<feature type="binding site">
    <location>
        <begin position="179"/>
        <end position="182"/>
    </location>
    <ligand>
        <name>FAD</name>
        <dbReference type="ChEBI" id="CHEBI:57692"/>
    </ligand>
</feature>
<feature type="binding site" evidence="1">
    <location>
        <position position="182"/>
    </location>
    <ligand>
        <name>NADP(+)</name>
        <dbReference type="ChEBI" id="CHEBI:58349"/>
    </ligand>
</feature>
<feature type="binding site">
    <location>
        <begin position="200"/>
        <end position="202"/>
    </location>
    <ligand>
        <name>FAD</name>
        <dbReference type="ChEBI" id="CHEBI:57692"/>
    </ligand>
</feature>
<feature type="binding site" evidence="1">
    <location>
        <position position="202"/>
    </location>
    <ligand>
        <name>NADP(+)</name>
        <dbReference type="ChEBI" id="CHEBI:58349"/>
    </ligand>
</feature>
<feature type="binding site" evidence="1">
    <location>
        <position position="206"/>
    </location>
    <ligand>
        <name>FAD</name>
        <dbReference type="ChEBI" id="CHEBI:57692"/>
    </ligand>
</feature>
<feature type="binding site">
    <location>
        <begin position="218"/>
        <end position="220"/>
    </location>
    <ligand>
        <name>FAD</name>
        <dbReference type="ChEBI" id="CHEBI:57692"/>
    </ligand>
</feature>
<feature type="binding site" evidence="1">
    <location>
        <position position="260"/>
    </location>
    <ligand>
        <name>FAD</name>
        <dbReference type="ChEBI" id="CHEBI:57692"/>
    </ligand>
</feature>
<feature type="binding site" evidence="1">
    <location>
        <position position="260"/>
    </location>
    <ligand>
        <name>NADP(+)</name>
        <dbReference type="ChEBI" id="CHEBI:58349"/>
    </ligand>
</feature>
<feature type="binding site" evidence="1">
    <location>
        <begin position="292"/>
        <end position="293"/>
    </location>
    <ligand>
        <name>NADP(+)</name>
        <dbReference type="ChEBI" id="CHEBI:58349"/>
    </ligand>
</feature>
<feature type="binding site" evidence="1">
    <location>
        <begin position="322"/>
        <end position="323"/>
    </location>
    <ligand>
        <name>NADP(+)</name>
        <dbReference type="ChEBI" id="CHEBI:58349"/>
    </ligand>
</feature>
<feature type="binding site" evidence="1">
    <location>
        <begin position="332"/>
        <end position="336"/>
    </location>
    <ligand>
        <name>NADP(+)</name>
        <dbReference type="ChEBI" id="CHEBI:58349"/>
    </ligand>
</feature>
<feature type="binding site" evidence="1">
    <location>
        <position position="332"/>
    </location>
    <ligand>
        <name>NADP(+)</name>
        <dbReference type="ChEBI" id="CHEBI:58349"/>
    </ligand>
</feature>
<feature type="binding site" evidence="1">
    <location>
        <begin position="361"/>
        <end position="362"/>
    </location>
    <ligand>
        <name>NADP(+)</name>
        <dbReference type="ChEBI" id="CHEBI:58349"/>
    </ligand>
</feature>
<feature type="binding site" evidence="1">
    <location>
        <position position="400"/>
    </location>
    <ligand>
        <name>NADP(+)</name>
        <dbReference type="ChEBI" id="CHEBI:58349"/>
    </ligand>
</feature>
<feature type="strand" evidence="6">
    <location>
        <begin position="119"/>
        <end position="121"/>
    </location>
</feature>
<feature type="strand" evidence="6">
    <location>
        <begin position="123"/>
        <end position="132"/>
    </location>
</feature>
<feature type="strand" evidence="6">
    <location>
        <begin position="142"/>
        <end position="148"/>
    </location>
</feature>
<feature type="strand" evidence="6">
    <location>
        <begin position="161"/>
        <end position="165"/>
    </location>
</feature>
<feature type="strand" evidence="6">
    <location>
        <begin position="167"/>
        <end position="170"/>
    </location>
</feature>
<feature type="turn" evidence="6">
    <location>
        <begin position="171"/>
        <end position="173"/>
    </location>
</feature>
<feature type="strand" evidence="6">
    <location>
        <begin position="179"/>
        <end position="183"/>
    </location>
</feature>
<feature type="turn" evidence="6">
    <location>
        <begin position="187"/>
        <end position="192"/>
    </location>
</feature>
<feature type="strand" evidence="6">
    <location>
        <begin position="196"/>
        <end position="202"/>
    </location>
</feature>
<feature type="strand" evidence="6">
    <location>
        <begin position="205"/>
        <end position="207"/>
    </location>
</feature>
<feature type="turn" evidence="6">
    <location>
        <begin position="209"/>
        <end position="211"/>
    </location>
</feature>
<feature type="strand" evidence="6">
    <location>
        <begin position="214"/>
        <end position="216"/>
    </location>
</feature>
<feature type="helix" evidence="6">
    <location>
        <begin position="218"/>
        <end position="224"/>
    </location>
</feature>
<feature type="strand" evidence="6">
    <location>
        <begin position="233"/>
        <end position="239"/>
    </location>
</feature>
<feature type="strand" evidence="6">
    <location>
        <begin position="252"/>
        <end position="258"/>
    </location>
</feature>
<feature type="helix" evidence="6">
    <location>
        <begin position="259"/>
        <end position="262"/>
    </location>
</feature>
<feature type="helix" evidence="6">
    <location>
        <begin position="263"/>
        <end position="273"/>
    </location>
</feature>
<feature type="strand" evidence="6">
    <location>
        <begin position="284"/>
        <end position="294"/>
    </location>
</feature>
<feature type="helix" evidence="6">
    <location>
        <begin position="295"/>
        <end position="297"/>
    </location>
</feature>
<feature type="helix" evidence="6">
    <location>
        <begin position="301"/>
        <end position="310"/>
    </location>
</feature>
<feature type="turn" evidence="6">
    <location>
        <begin position="312"/>
        <end position="314"/>
    </location>
</feature>
<feature type="strand" evidence="6">
    <location>
        <begin position="315"/>
        <end position="321"/>
    </location>
</feature>
<feature type="turn" evidence="6">
    <location>
        <begin position="322"/>
        <end position="324"/>
    </location>
</feature>
<feature type="helix" evidence="6">
    <location>
        <begin position="335"/>
        <end position="341"/>
    </location>
</feature>
<feature type="helix" evidence="6">
    <location>
        <begin position="343"/>
        <end position="350"/>
    </location>
</feature>
<feature type="strand" evidence="6">
    <location>
        <begin position="355"/>
        <end position="361"/>
    </location>
</feature>
<feature type="helix" evidence="6">
    <location>
        <begin position="363"/>
        <end position="365"/>
    </location>
</feature>
<feature type="helix" evidence="6">
    <location>
        <begin position="366"/>
        <end position="379"/>
    </location>
</feature>
<feature type="helix" evidence="6">
    <location>
        <begin position="384"/>
        <end position="393"/>
    </location>
</feature>
<feature type="strand" evidence="6">
    <location>
        <begin position="397"/>
        <end position="401"/>
    </location>
</feature>
<evidence type="ECO:0000250" key="1"/>
<evidence type="ECO:0000255" key="2">
    <source>
        <dbReference type="PROSITE-ProRule" id="PRU00716"/>
    </source>
</evidence>
<evidence type="ECO:0000255" key="3">
    <source>
        <dbReference type="PROSITE-ProRule" id="PRU00771"/>
    </source>
</evidence>
<evidence type="ECO:0000256" key="4">
    <source>
        <dbReference type="SAM" id="MobiDB-lite"/>
    </source>
</evidence>
<evidence type="ECO:0000305" key="5"/>
<evidence type="ECO:0007829" key="6">
    <source>
        <dbReference type="PDB" id="2B5O"/>
    </source>
</evidence>